<sequence length="342" mass="39311">MADPKSSFLNVYSILKSELLQDPAFEFSTDSRQWVERMLDYNVPGGKLNRGLSVIDSYKLLKDGQELNDEEIFLASALGWCIEWLQAYFLVLDDIMDNSHTRRGHPCWFRVPKVGMIAPNDGVVLRNHIPRILKKHFRGKPYYVDLLDLFNEVEFQTASGQMIDLITTLEGEKDLSKYTLSLHRRIVQYKTAYYSFYLPVACALLMVGENLDNHTDVKNILVEMGTYFQVQDDYLDCFGAPETIGKIGTDIEDFKCSWLVVKALELSNEEQKKVLYENYGKPDPANVAKVKTLYNELNLEGAYADYESKSYEKLVTCIEGHPSKAVQGVLKSFWAKIYKRQK</sequence>
<evidence type="ECO:0000250" key="1"/>
<evidence type="ECO:0000250" key="2">
    <source>
        <dbReference type="UniProtKB" id="P14324"/>
    </source>
</evidence>
<evidence type="ECO:0000305" key="3"/>
<comment type="function">
    <text>Catalyzes the sequential condensation of isopentenyl pyrophosphate with the allylic pyrophosphates, dimethylallyl pyrophosphate, and then with the resultant geranylpyrophosphate to the ultimate product farnesyl pyrophosphate.</text>
</comment>
<comment type="catalytic activity">
    <reaction>
        <text>isopentenyl diphosphate + dimethylallyl diphosphate = (2E)-geranyl diphosphate + diphosphate</text>
        <dbReference type="Rhea" id="RHEA:22408"/>
        <dbReference type="ChEBI" id="CHEBI:33019"/>
        <dbReference type="ChEBI" id="CHEBI:57623"/>
        <dbReference type="ChEBI" id="CHEBI:58057"/>
        <dbReference type="ChEBI" id="CHEBI:128769"/>
        <dbReference type="EC" id="2.5.1.1"/>
    </reaction>
</comment>
<comment type="catalytic activity">
    <reaction>
        <text>isopentenyl diphosphate + (2E)-geranyl diphosphate = (2E,6E)-farnesyl diphosphate + diphosphate</text>
        <dbReference type="Rhea" id="RHEA:19361"/>
        <dbReference type="ChEBI" id="CHEBI:33019"/>
        <dbReference type="ChEBI" id="CHEBI:58057"/>
        <dbReference type="ChEBI" id="CHEBI:128769"/>
        <dbReference type="ChEBI" id="CHEBI:175763"/>
        <dbReference type="EC" id="2.5.1.10"/>
    </reaction>
</comment>
<comment type="cofactor">
    <cofactor evidence="1">
        <name>Mg(2+)</name>
        <dbReference type="ChEBI" id="CHEBI:18420"/>
    </cofactor>
    <text evidence="1">Binds 2 Mg(2+) ions per subunit.</text>
</comment>
<comment type="pathway">
    <text>Isoprenoid biosynthesis; farnesyl diphosphate biosynthesis; farnesyl diphosphate from geranyl diphosphate and isopentenyl diphosphate: step 1/1.</text>
</comment>
<comment type="pathway">
    <text>Isoprenoid biosynthesis; geranyl diphosphate biosynthesis; geranyl diphosphate from dimethylallyl diphosphate and isopentenyl diphosphate: step 1/1.</text>
</comment>
<comment type="subcellular location">
    <subcellularLocation>
        <location evidence="1">Cytoplasm</location>
    </subcellularLocation>
</comment>
<comment type="similarity">
    <text evidence="3">Belongs to the FPP/GGPP synthase family.</text>
</comment>
<gene>
    <name type="primary">FPS2</name>
</gene>
<reference key="1">
    <citation type="journal article" date="1995" name="Arch. Biochem. Biophys.">
        <title>Farnesyl pyrophosphate synthase from white lupin: molecular cloning, expression, and purification of the expressed protein.</title>
        <authorList>
            <person name="Attucci S."/>
            <person name="Aitken S.M."/>
            <person name="Gulick P.J."/>
            <person name="Ibrahim R.K."/>
        </authorList>
    </citation>
    <scope>NUCLEOTIDE SEQUENCE [MRNA]</scope>
    <source>
        <tissue>Root</tissue>
    </source>
</reference>
<proteinExistence type="evidence at transcript level"/>
<dbReference type="EC" id="2.5.1.10"/>
<dbReference type="EC" id="2.5.1.1"/>
<dbReference type="EMBL" id="U20771">
    <property type="protein sequence ID" value="AAA87729.1"/>
    <property type="molecule type" value="mRNA"/>
</dbReference>
<dbReference type="PIR" id="S66471">
    <property type="entry name" value="S66471"/>
</dbReference>
<dbReference type="SMR" id="P49352"/>
<dbReference type="UniPathway" id="UPA00259">
    <property type="reaction ID" value="UER00368"/>
</dbReference>
<dbReference type="UniPathway" id="UPA00260">
    <property type="reaction ID" value="UER00369"/>
</dbReference>
<dbReference type="GO" id="GO:0005737">
    <property type="term" value="C:cytoplasm"/>
    <property type="evidence" value="ECO:0007669"/>
    <property type="project" value="UniProtKB-SubCell"/>
</dbReference>
<dbReference type="GO" id="GO:0004337">
    <property type="term" value="F:(2E,6E)-farnesyl diphosphate synthase activity"/>
    <property type="evidence" value="ECO:0007669"/>
    <property type="project" value="UniProtKB-EC"/>
</dbReference>
<dbReference type="GO" id="GO:0004161">
    <property type="term" value="F:dimethylallyltranstransferase activity"/>
    <property type="evidence" value="ECO:0007669"/>
    <property type="project" value="UniProtKB-EC"/>
</dbReference>
<dbReference type="GO" id="GO:0046872">
    <property type="term" value="F:metal ion binding"/>
    <property type="evidence" value="ECO:0007669"/>
    <property type="project" value="UniProtKB-KW"/>
</dbReference>
<dbReference type="GO" id="GO:0006695">
    <property type="term" value="P:cholesterol biosynthetic process"/>
    <property type="evidence" value="ECO:0007669"/>
    <property type="project" value="UniProtKB-KW"/>
</dbReference>
<dbReference type="GO" id="GO:0045337">
    <property type="term" value="P:farnesyl diphosphate biosynthetic process"/>
    <property type="evidence" value="ECO:0007669"/>
    <property type="project" value="UniProtKB-UniPathway"/>
</dbReference>
<dbReference type="GO" id="GO:0033384">
    <property type="term" value="P:geranyl diphosphate biosynthetic process"/>
    <property type="evidence" value="ECO:0007669"/>
    <property type="project" value="UniProtKB-UniPathway"/>
</dbReference>
<dbReference type="CDD" id="cd00685">
    <property type="entry name" value="Trans_IPPS_HT"/>
    <property type="match status" value="1"/>
</dbReference>
<dbReference type="FunFam" id="1.10.600.10:FF:000008">
    <property type="entry name" value="Farnesyl pyrophosphate synthase"/>
    <property type="match status" value="1"/>
</dbReference>
<dbReference type="Gene3D" id="1.10.600.10">
    <property type="entry name" value="Farnesyl Diphosphate Synthase"/>
    <property type="match status" value="1"/>
</dbReference>
<dbReference type="InterPro" id="IPR039702">
    <property type="entry name" value="FPS1-like"/>
</dbReference>
<dbReference type="InterPro" id="IPR008949">
    <property type="entry name" value="Isoprenoid_synthase_dom_sf"/>
</dbReference>
<dbReference type="InterPro" id="IPR000092">
    <property type="entry name" value="Polyprenyl_synt"/>
</dbReference>
<dbReference type="InterPro" id="IPR033749">
    <property type="entry name" value="Polyprenyl_synt_CS"/>
</dbReference>
<dbReference type="PANTHER" id="PTHR11525:SF0">
    <property type="entry name" value="FARNESYL PYROPHOSPHATE SYNTHASE"/>
    <property type="match status" value="1"/>
</dbReference>
<dbReference type="PANTHER" id="PTHR11525">
    <property type="entry name" value="FARNESYL-PYROPHOSPHATE SYNTHETASE"/>
    <property type="match status" value="1"/>
</dbReference>
<dbReference type="Pfam" id="PF00348">
    <property type="entry name" value="polyprenyl_synt"/>
    <property type="match status" value="1"/>
</dbReference>
<dbReference type="SFLD" id="SFLDS00005">
    <property type="entry name" value="Isoprenoid_Synthase_Type_I"/>
    <property type="match status" value="1"/>
</dbReference>
<dbReference type="SFLD" id="SFLDG01017">
    <property type="entry name" value="Polyprenyl_Transferase_Like"/>
    <property type="match status" value="1"/>
</dbReference>
<dbReference type="SUPFAM" id="SSF48576">
    <property type="entry name" value="Terpenoid synthases"/>
    <property type="match status" value="1"/>
</dbReference>
<dbReference type="PROSITE" id="PS00723">
    <property type="entry name" value="POLYPRENYL_SYNTHASE_1"/>
    <property type="match status" value="1"/>
</dbReference>
<dbReference type="PROSITE" id="PS00444">
    <property type="entry name" value="POLYPRENYL_SYNTHASE_2"/>
    <property type="match status" value="1"/>
</dbReference>
<protein>
    <recommendedName>
        <fullName>Farnesyl pyrophosphate synthase 2</fullName>
        <shortName>FPP synthase 2</shortName>
        <shortName>FPS 2</shortName>
        <ecNumber>2.5.1.10</ecNumber>
    </recommendedName>
    <alternativeName>
        <fullName>(2E,6E)-farnesyl diphosphate synthase 2</fullName>
    </alternativeName>
    <alternativeName>
        <fullName>Dimethylallyltranstransferase 2</fullName>
        <ecNumber>2.5.1.1</ecNumber>
    </alternativeName>
    <alternativeName>
        <fullName>Farnesyl diphosphate synthase 2</fullName>
    </alternativeName>
    <alternativeName>
        <fullName>Geranyltranstransferase 2</fullName>
    </alternativeName>
</protein>
<feature type="chain" id="PRO_0000123957" description="Farnesyl pyrophosphate synthase 2">
    <location>
        <begin position="1"/>
        <end position="342"/>
    </location>
</feature>
<feature type="binding site" evidence="2">
    <location>
        <position position="47"/>
    </location>
    <ligand>
        <name>isopentenyl diphosphate</name>
        <dbReference type="ChEBI" id="CHEBI:128769"/>
    </ligand>
</feature>
<feature type="binding site" evidence="2">
    <location>
        <position position="50"/>
    </location>
    <ligand>
        <name>isopentenyl diphosphate</name>
        <dbReference type="ChEBI" id="CHEBI:128769"/>
    </ligand>
</feature>
<feature type="binding site" evidence="2">
    <location>
        <position position="86"/>
    </location>
    <ligand>
        <name>isopentenyl diphosphate</name>
        <dbReference type="ChEBI" id="CHEBI:128769"/>
    </ligand>
</feature>
<feature type="binding site" evidence="2">
    <location>
        <position position="93"/>
    </location>
    <ligand>
        <name>Mg(2+)</name>
        <dbReference type="ChEBI" id="CHEBI:18420"/>
        <label>1</label>
    </ligand>
</feature>
<feature type="binding site" evidence="2">
    <location>
        <position position="93"/>
    </location>
    <ligand>
        <name>Mg(2+)</name>
        <dbReference type="ChEBI" id="CHEBI:18420"/>
        <label>2</label>
    </ligand>
</feature>
<feature type="binding site" evidence="2">
    <location>
        <position position="97"/>
    </location>
    <ligand>
        <name>Mg(2+)</name>
        <dbReference type="ChEBI" id="CHEBI:18420"/>
        <label>1</label>
    </ligand>
</feature>
<feature type="binding site" evidence="2">
    <location>
        <position position="97"/>
    </location>
    <ligand>
        <name>Mg(2+)</name>
        <dbReference type="ChEBI" id="CHEBI:18420"/>
        <label>2</label>
    </ligand>
</feature>
<feature type="binding site" evidence="1">
    <location>
        <position position="102"/>
    </location>
    <ligand>
        <name>dimethylallyl diphosphate</name>
        <dbReference type="ChEBI" id="CHEBI:57623"/>
    </ligand>
</feature>
<feature type="binding site" evidence="2">
    <location>
        <position position="103"/>
    </location>
    <ligand>
        <name>isopentenyl diphosphate</name>
        <dbReference type="ChEBI" id="CHEBI:128769"/>
    </ligand>
</feature>
<feature type="binding site" evidence="1">
    <location>
        <position position="190"/>
    </location>
    <ligand>
        <name>dimethylallyl diphosphate</name>
        <dbReference type="ChEBI" id="CHEBI:57623"/>
    </ligand>
</feature>
<feature type="binding site" evidence="1">
    <location>
        <position position="191"/>
    </location>
    <ligand>
        <name>dimethylallyl diphosphate</name>
        <dbReference type="ChEBI" id="CHEBI:57623"/>
    </ligand>
</feature>
<feature type="binding site" evidence="1">
    <location>
        <position position="229"/>
    </location>
    <ligand>
        <name>dimethylallyl diphosphate</name>
        <dbReference type="ChEBI" id="CHEBI:57623"/>
    </ligand>
</feature>
<feature type="binding site" evidence="1">
    <location>
        <position position="246"/>
    </location>
    <ligand>
        <name>dimethylallyl diphosphate</name>
        <dbReference type="ChEBI" id="CHEBI:57623"/>
    </ligand>
</feature>
<feature type="binding site" evidence="1">
    <location>
        <position position="255"/>
    </location>
    <ligand>
        <name>dimethylallyl diphosphate</name>
        <dbReference type="ChEBI" id="CHEBI:57623"/>
    </ligand>
</feature>
<keyword id="KW-0152">Cholesterol biosynthesis</keyword>
<keyword id="KW-0153">Cholesterol metabolism</keyword>
<keyword id="KW-0963">Cytoplasm</keyword>
<keyword id="KW-0414">Isoprene biosynthesis</keyword>
<keyword id="KW-0444">Lipid biosynthesis</keyword>
<keyword id="KW-0443">Lipid metabolism</keyword>
<keyword id="KW-0460">Magnesium</keyword>
<keyword id="KW-0479">Metal-binding</keyword>
<keyword id="KW-0752">Steroid biosynthesis</keyword>
<keyword id="KW-0753">Steroid metabolism</keyword>
<keyword id="KW-0756">Sterol biosynthesis</keyword>
<keyword id="KW-1207">Sterol metabolism</keyword>
<keyword id="KW-0808">Transferase</keyword>
<accession>P49352</accession>
<name>FPPS2_LUPAL</name>
<organism>
    <name type="scientific">Lupinus albus</name>
    <name type="common">White lupine</name>
    <name type="synonym">Lupinus termis</name>
    <dbReference type="NCBI Taxonomy" id="3870"/>
    <lineage>
        <taxon>Eukaryota</taxon>
        <taxon>Viridiplantae</taxon>
        <taxon>Streptophyta</taxon>
        <taxon>Embryophyta</taxon>
        <taxon>Tracheophyta</taxon>
        <taxon>Spermatophyta</taxon>
        <taxon>Magnoliopsida</taxon>
        <taxon>eudicotyledons</taxon>
        <taxon>Gunneridae</taxon>
        <taxon>Pentapetalae</taxon>
        <taxon>rosids</taxon>
        <taxon>fabids</taxon>
        <taxon>Fabales</taxon>
        <taxon>Fabaceae</taxon>
        <taxon>Papilionoideae</taxon>
        <taxon>50 kb inversion clade</taxon>
        <taxon>genistoids sensu lato</taxon>
        <taxon>core genistoids</taxon>
        <taxon>Genisteae</taxon>
        <taxon>Lupinus</taxon>
    </lineage>
</organism>